<comment type="catalytic activity">
    <reaction evidence="1">
        <text>alpha-D-xylose = alpha-D-xylulofuranose</text>
        <dbReference type="Rhea" id="RHEA:22816"/>
        <dbReference type="ChEBI" id="CHEBI:28518"/>
        <dbReference type="ChEBI" id="CHEBI:188998"/>
        <dbReference type="EC" id="5.3.1.5"/>
    </reaction>
</comment>
<comment type="cofactor">
    <cofactor evidence="1">
        <name>Mg(2+)</name>
        <dbReference type="ChEBI" id="CHEBI:18420"/>
    </cofactor>
    <text evidence="1">Binds 2 magnesium ions per subunit.</text>
</comment>
<comment type="subunit">
    <text evidence="1">Homotetramer.</text>
</comment>
<comment type="subcellular location">
    <subcellularLocation>
        <location evidence="1">Cytoplasm</location>
    </subcellularLocation>
</comment>
<comment type="similarity">
    <text evidence="1">Belongs to the xylose isomerase family.</text>
</comment>
<organism>
    <name type="scientific">Escherichia coli (strain K12 / DH10B)</name>
    <dbReference type="NCBI Taxonomy" id="316385"/>
    <lineage>
        <taxon>Bacteria</taxon>
        <taxon>Pseudomonadati</taxon>
        <taxon>Pseudomonadota</taxon>
        <taxon>Gammaproteobacteria</taxon>
        <taxon>Enterobacterales</taxon>
        <taxon>Enterobacteriaceae</taxon>
        <taxon>Escherichia</taxon>
    </lineage>
</organism>
<reference key="1">
    <citation type="journal article" date="2008" name="J. Bacteriol.">
        <title>The complete genome sequence of Escherichia coli DH10B: insights into the biology of a laboratory workhorse.</title>
        <authorList>
            <person name="Durfee T."/>
            <person name="Nelson R."/>
            <person name="Baldwin S."/>
            <person name="Plunkett G. III"/>
            <person name="Burland V."/>
            <person name="Mau B."/>
            <person name="Petrosino J.F."/>
            <person name="Qin X."/>
            <person name="Muzny D.M."/>
            <person name="Ayele M."/>
            <person name="Gibbs R.A."/>
            <person name="Csorgo B."/>
            <person name="Posfai G."/>
            <person name="Weinstock G.M."/>
            <person name="Blattner F.R."/>
        </authorList>
    </citation>
    <scope>NUCLEOTIDE SEQUENCE [LARGE SCALE GENOMIC DNA]</scope>
    <source>
        <strain>K12 / DH10B</strain>
    </source>
</reference>
<name>XYLA_ECODH</name>
<proteinExistence type="inferred from homology"/>
<accession>B1X8I1</accession>
<sequence>MQAYFDQLDRVRYEGSKSSNPLAFRHYNPDELVLGKRMEEHLRFAACYWHTFCWNGADMFGVGAFNRPWQQPGEALALAKRKADVAFEFFHKLHVPFYCFHDVDVSPEGASLKEYINNFAQMVDVLAGKQEESGVKLLWGTANCFTNPRYGAGAATNPDPEVFSWAATQVVTAMEATHKLGGENYVLWGGREGYETLLNTDLRQEREQLGRFMQMVVEHKHKIGFQGTLLIEPKPQEPTKHQYDYDAATVYGFLKQFGLEKEIKLNIEANHATLAGHSFHHEIATAIALGLFGSVDANRGDAQLGWDTDQFPNSVEENALVMYEILKAGGFTTGGLNFDAKVRRQSTDKYDLFYGHIGAMDTMALALKIAARMIEDGELDKRIAQRYSGWNSELGQQILKGQMSLADLAKYAQEHHLSPVHQSGRQEQLENLVNHYLFDK</sequence>
<feature type="chain" id="PRO_1000200288" description="Xylose isomerase">
    <location>
        <begin position="1"/>
        <end position="440"/>
    </location>
</feature>
<feature type="active site" evidence="1">
    <location>
        <position position="101"/>
    </location>
</feature>
<feature type="active site" evidence="1">
    <location>
        <position position="104"/>
    </location>
</feature>
<feature type="binding site" evidence="1">
    <location>
        <position position="232"/>
    </location>
    <ligand>
        <name>Mg(2+)</name>
        <dbReference type="ChEBI" id="CHEBI:18420"/>
        <label>1</label>
    </ligand>
</feature>
<feature type="binding site" evidence="1">
    <location>
        <position position="268"/>
    </location>
    <ligand>
        <name>Mg(2+)</name>
        <dbReference type="ChEBI" id="CHEBI:18420"/>
        <label>1</label>
    </ligand>
</feature>
<feature type="binding site" evidence="1">
    <location>
        <position position="268"/>
    </location>
    <ligand>
        <name>Mg(2+)</name>
        <dbReference type="ChEBI" id="CHEBI:18420"/>
        <label>2</label>
    </ligand>
</feature>
<feature type="binding site" evidence="1">
    <location>
        <position position="271"/>
    </location>
    <ligand>
        <name>Mg(2+)</name>
        <dbReference type="ChEBI" id="CHEBI:18420"/>
        <label>2</label>
    </ligand>
</feature>
<feature type="binding site" evidence="1">
    <location>
        <position position="296"/>
    </location>
    <ligand>
        <name>Mg(2+)</name>
        <dbReference type="ChEBI" id="CHEBI:18420"/>
        <label>1</label>
    </ligand>
</feature>
<feature type="binding site" evidence="1">
    <location>
        <position position="307"/>
    </location>
    <ligand>
        <name>Mg(2+)</name>
        <dbReference type="ChEBI" id="CHEBI:18420"/>
        <label>2</label>
    </ligand>
</feature>
<feature type="binding site" evidence="1">
    <location>
        <position position="309"/>
    </location>
    <ligand>
        <name>Mg(2+)</name>
        <dbReference type="ChEBI" id="CHEBI:18420"/>
        <label>2</label>
    </ligand>
</feature>
<feature type="binding site" evidence="1">
    <location>
        <position position="339"/>
    </location>
    <ligand>
        <name>Mg(2+)</name>
        <dbReference type="ChEBI" id="CHEBI:18420"/>
        <label>1</label>
    </ligand>
</feature>
<keyword id="KW-0119">Carbohydrate metabolism</keyword>
<keyword id="KW-0963">Cytoplasm</keyword>
<keyword id="KW-0413">Isomerase</keyword>
<keyword id="KW-0460">Magnesium</keyword>
<keyword id="KW-0479">Metal-binding</keyword>
<keyword id="KW-0859">Xylose metabolism</keyword>
<evidence type="ECO:0000255" key="1">
    <source>
        <dbReference type="HAMAP-Rule" id="MF_00455"/>
    </source>
</evidence>
<protein>
    <recommendedName>
        <fullName evidence="1">Xylose isomerase</fullName>
        <ecNumber evidence="1">5.3.1.5</ecNumber>
    </recommendedName>
</protein>
<dbReference type="EC" id="5.3.1.5" evidence="1"/>
<dbReference type="EMBL" id="CP000948">
    <property type="protein sequence ID" value="ACB04616.1"/>
    <property type="molecule type" value="Genomic_DNA"/>
</dbReference>
<dbReference type="RefSeq" id="WP_001149591.1">
    <property type="nucleotide sequence ID" value="NC_010473.1"/>
</dbReference>
<dbReference type="SMR" id="B1X8I1"/>
<dbReference type="KEGG" id="ecd:ECDH10B_3746"/>
<dbReference type="HOGENOM" id="CLU_037261_1_0_6"/>
<dbReference type="GO" id="GO:0005737">
    <property type="term" value="C:cytoplasm"/>
    <property type="evidence" value="ECO:0007669"/>
    <property type="project" value="UniProtKB-SubCell"/>
</dbReference>
<dbReference type="GO" id="GO:0000287">
    <property type="term" value="F:magnesium ion binding"/>
    <property type="evidence" value="ECO:0007669"/>
    <property type="project" value="UniProtKB-UniRule"/>
</dbReference>
<dbReference type="GO" id="GO:0009045">
    <property type="term" value="F:xylose isomerase activity"/>
    <property type="evidence" value="ECO:0007669"/>
    <property type="project" value="UniProtKB-UniRule"/>
</dbReference>
<dbReference type="GO" id="GO:0042732">
    <property type="term" value="P:D-xylose metabolic process"/>
    <property type="evidence" value="ECO:0007669"/>
    <property type="project" value="UniProtKB-UniRule"/>
</dbReference>
<dbReference type="FunFam" id="3.20.20.150:FF:000002">
    <property type="entry name" value="Xylose isomerase"/>
    <property type="match status" value="1"/>
</dbReference>
<dbReference type="Gene3D" id="3.20.20.150">
    <property type="entry name" value="Divalent-metal-dependent TIM barrel enzymes"/>
    <property type="match status" value="1"/>
</dbReference>
<dbReference type="HAMAP" id="MF_00455">
    <property type="entry name" value="Xylose_isom_A"/>
    <property type="match status" value="1"/>
</dbReference>
<dbReference type="InterPro" id="IPR036237">
    <property type="entry name" value="Xyl_isomerase-like_sf"/>
</dbReference>
<dbReference type="InterPro" id="IPR013452">
    <property type="entry name" value="Xylose_isom_bac"/>
</dbReference>
<dbReference type="InterPro" id="IPR001998">
    <property type="entry name" value="Xylose_isomerase"/>
</dbReference>
<dbReference type="NCBIfam" id="NF003998">
    <property type="entry name" value="PRK05474.1"/>
    <property type="match status" value="1"/>
</dbReference>
<dbReference type="NCBIfam" id="TIGR02630">
    <property type="entry name" value="xylose_isom_A"/>
    <property type="match status" value="1"/>
</dbReference>
<dbReference type="PANTHER" id="PTHR48408">
    <property type="match status" value="1"/>
</dbReference>
<dbReference type="PANTHER" id="PTHR48408:SF1">
    <property type="entry name" value="XYLOSE ISOMERASE"/>
    <property type="match status" value="1"/>
</dbReference>
<dbReference type="PRINTS" id="PR00688">
    <property type="entry name" value="XYLOSISMRASE"/>
</dbReference>
<dbReference type="SUPFAM" id="SSF51658">
    <property type="entry name" value="Xylose isomerase-like"/>
    <property type="match status" value="1"/>
</dbReference>
<dbReference type="PROSITE" id="PS51415">
    <property type="entry name" value="XYLOSE_ISOMERASE"/>
    <property type="match status" value="1"/>
</dbReference>
<gene>
    <name evidence="1" type="primary">xylA</name>
    <name type="ordered locus">ECDH10B_3746</name>
</gene>